<protein>
    <recommendedName>
        <fullName evidence="1">Large ribosomal subunit protein eL34</fullName>
    </recommendedName>
    <alternativeName>
        <fullName>60S ribosomal protein L34</fullName>
    </alternativeName>
</protein>
<feature type="chain" id="PRO_0000131840" description="Large ribosomal subunit protein eL34">
    <location>
        <begin position="1"/>
        <end position="120"/>
    </location>
</feature>
<gene>
    <name type="primary">RPL34</name>
</gene>
<proteinExistence type="evidence at transcript level"/>
<comment type="similarity">
    <text evidence="1">Belongs to the eukaryotic ribosomal protein eL34 family.</text>
</comment>
<name>RL34_PEA</name>
<organism>
    <name type="scientific">Pisum sativum</name>
    <name type="common">Garden pea</name>
    <name type="synonym">Lathyrus oleraceus</name>
    <dbReference type="NCBI Taxonomy" id="3888"/>
    <lineage>
        <taxon>Eukaryota</taxon>
        <taxon>Viridiplantae</taxon>
        <taxon>Streptophyta</taxon>
        <taxon>Embryophyta</taxon>
        <taxon>Tracheophyta</taxon>
        <taxon>Spermatophyta</taxon>
        <taxon>Magnoliopsida</taxon>
        <taxon>eudicotyledons</taxon>
        <taxon>Gunneridae</taxon>
        <taxon>Pentapetalae</taxon>
        <taxon>rosids</taxon>
        <taxon>fabids</taxon>
        <taxon>Fabales</taxon>
        <taxon>Fabaceae</taxon>
        <taxon>Papilionoideae</taxon>
        <taxon>50 kb inversion clade</taxon>
        <taxon>NPAAA clade</taxon>
        <taxon>Hologalegina</taxon>
        <taxon>IRL clade</taxon>
        <taxon>Fabeae</taxon>
        <taxon>Pisum</taxon>
    </lineage>
</organism>
<evidence type="ECO:0000305" key="1"/>
<accession>P40590</accession>
<dbReference type="EMBL" id="U10047">
    <property type="protein sequence ID" value="AAA86953.1"/>
    <property type="molecule type" value="mRNA"/>
</dbReference>
<dbReference type="PIR" id="S60476">
    <property type="entry name" value="S60476"/>
</dbReference>
<dbReference type="SMR" id="P40590"/>
<dbReference type="EnsemblPlants" id="Psat0s4734g0040.1">
    <property type="protein sequence ID" value="Psat0s4734g0040.1.cds"/>
    <property type="gene ID" value="Psat0s4734g0040"/>
</dbReference>
<dbReference type="Gramene" id="Psat0s4734g0040.1">
    <property type="protein sequence ID" value="Psat0s4734g0040.1.cds"/>
    <property type="gene ID" value="Psat0s4734g0040"/>
</dbReference>
<dbReference type="OrthoDB" id="1404159at2759"/>
<dbReference type="GO" id="GO:1990904">
    <property type="term" value="C:ribonucleoprotein complex"/>
    <property type="evidence" value="ECO:0007669"/>
    <property type="project" value="UniProtKB-KW"/>
</dbReference>
<dbReference type="GO" id="GO:0005840">
    <property type="term" value="C:ribosome"/>
    <property type="evidence" value="ECO:0007669"/>
    <property type="project" value="UniProtKB-KW"/>
</dbReference>
<dbReference type="GO" id="GO:0003735">
    <property type="term" value="F:structural constituent of ribosome"/>
    <property type="evidence" value="ECO:0007669"/>
    <property type="project" value="InterPro"/>
</dbReference>
<dbReference type="GO" id="GO:0006412">
    <property type="term" value="P:translation"/>
    <property type="evidence" value="ECO:0007669"/>
    <property type="project" value="InterPro"/>
</dbReference>
<dbReference type="Gene3D" id="6.20.340.10">
    <property type="match status" value="1"/>
</dbReference>
<dbReference type="Gene3D" id="6.20.370.70">
    <property type="match status" value="1"/>
</dbReference>
<dbReference type="InterPro" id="IPR008195">
    <property type="entry name" value="Ribosomal_eL34"/>
</dbReference>
<dbReference type="InterPro" id="IPR038562">
    <property type="entry name" value="Ribosomal_eL34_C_sf"/>
</dbReference>
<dbReference type="InterPro" id="IPR018065">
    <property type="entry name" value="Ribosomal_eL34_CS"/>
</dbReference>
<dbReference type="PANTHER" id="PTHR10759">
    <property type="entry name" value="60S RIBOSOMAL PROTEIN L34"/>
    <property type="match status" value="1"/>
</dbReference>
<dbReference type="Pfam" id="PF01199">
    <property type="entry name" value="Ribosomal_L34e"/>
    <property type="match status" value="1"/>
</dbReference>
<dbReference type="PRINTS" id="PR01250">
    <property type="entry name" value="RIBOSOMALL34"/>
</dbReference>
<dbReference type="PROSITE" id="PS01145">
    <property type="entry name" value="RIBOSOMAL_L34E"/>
    <property type="match status" value="1"/>
</dbReference>
<keyword id="KW-0687">Ribonucleoprotein</keyword>
<keyword id="KW-0689">Ribosomal protein</keyword>
<reference key="1">
    <citation type="journal article" date="1995" name="Plant Mol. Biol.">
        <title>Cell cycle regulation during growth-dormancy cycles in pea axillary buds.</title>
        <authorList>
            <person name="Devitt M.L."/>
            <person name="Stafstrom J.P."/>
        </authorList>
    </citation>
    <scope>NUCLEOTIDE SEQUENCE [MRNA]</scope>
    <source>
        <strain>cv. Alaska</strain>
    </source>
</reference>
<sequence>MVQRLTYRRRHSYATKSNQHRVVKTPGGKLVYQTTKKRASGPKCPVTGKRIQGIPHLRPTEYKRSRLSRNRRTVNRAYGGVLSGGAVRERIIRAFLVEEQKIVKKVLKIQKTKEKQAAKN</sequence>